<sequence length="480" mass="54959">MTLSFTARWRDELPATYTALLPTLLKNARLIWYNDKLAQQLAIPASLFDVTNGAGVWGGETLLPGMSPVAQVYSGHQFGVWAGQLGDGRGILLGEQLLADGSTLDWHLKGAGLTPYSRMGDGRAVLRSTIRESLASEAMHYLGIPTTRALSIVASDTPVQRETQETGAMLMRLAQSHMRFGHFEHFYYRREPEKVQQLADFAIRHYWPQWQDVPEKYVLWFEEVAARTGRLIVEWQTVGFSHGVMNTDNMSILGLTIDYGPFGFLDDYDPGFIGNHSDHQGRYRFDNQPSVALWNLQRLAQTLTPFIEIDALNRALDRYQDALLTHYGQRMRQKLGFFTEQKDDNVLLNELFSLMAREGSDYSRTFRMLSHTEQQSASSPLRDTFIDRAAFDAWFDRYRARLRTEAVDDALRQQQMQRVNPAVVLRNWLAQRAIDAAEQGDMAELHWLHEVLRQPFTDRDDDYASRPPEWGKRLEVSCSS</sequence>
<keyword id="KW-0067">ATP-binding</keyword>
<keyword id="KW-0460">Magnesium</keyword>
<keyword id="KW-0464">Manganese</keyword>
<keyword id="KW-0479">Metal-binding</keyword>
<keyword id="KW-0547">Nucleotide-binding</keyword>
<keyword id="KW-0548">Nucleotidyltransferase</keyword>
<keyword id="KW-0808">Transferase</keyword>
<evidence type="ECO:0000255" key="1">
    <source>
        <dbReference type="HAMAP-Rule" id="MF_00692"/>
    </source>
</evidence>
<protein>
    <recommendedName>
        <fullName evidence="1">Protein nucleotidyltransferase YdiU</fullName>
        <ecNumber evidence="1">2.7.7.-</ecNumber>
    </recommendedName>
    <alternativeName>
        <fullName evidence="1">Protein adenylyltransferase YdiU</fullName>
        <ecNumber evidence="1">2.7.7.108</ecNumber>
    </alternativeName>
    <alternativeName>
        <fullName evidence="1">Protein uridylyltransferase YdiU</fullName>
        <ecNumber evidence="1">2.7.7.-</ecNumber>
    </alternativeName>
</protein>
<gene>
    <name evidence="1" type="primary">ydiU</name>
    <name evidence="1" type="synonym">selO</name>
    <name type="ordered locus">SPC_2386</name>
</gene>
<comment type="function">
    <text evidence="1">Nucleotidyltransferase involved in the post-translational modification of proteins. It can catalyze the addition of adenosine monophosphate (AMP) or uridine monophosphate (UMP) to a protein, resulting in modifications known as AMPylation and UMPylation.</text>
</comment>
<comment type="catalytic activity">
    <reaction evidence="1">
        <text>L-seryl-[protein] + ATP = 3-O-(5'-adenylyl)-L-seryl-[protein] + diphosphate</text>
        <dbReference type="Rhea" id="RHEA:58120"/>
        <dbReference type="Rhea" id="RHEA-COMP:9863"/>
        <dbReference type="Rhea" id="RHEA-COMP:15073"/>
        <dbReference type="ChEBI" id="CHEBI:29999"/>
        <dbReference type="ChEBI" id="CHEBI:30616"/>
        <dbReference type="ChEBI" id="CHEBI:33019"/>
        <dbReference type="ChEBI" id="CHEBI:142516"/>
        <dbReference type="EC" id="2.7.7.108"/>
    </reaction>
</comment>
<comment type="catalytic activity">
    <reaction evidence="1">
        <text>L-threonyl-[protein] + ATP = 3-O-(5'-adenylyl)-L-threonyl-[protein] + diphosphate</text>
        <dbReference type="Rhea" id="RHEA:54292"/>
        <dbReference type="Rhea" id="RHEA-COMP:11060"/>
        <dbReference type="Rhea" id="RHEA-COMP:13847"/>
        <dbReference type="ChEBI" id="CHEBI:30013"/>
        <dbReference type="ChEBI" id="CHEBI:30616"/>
        <dbReference type="ChEBI" id="CHEBI:33019"/>
        <dbReference type="ChEBI" id="CHEBI:138113"/>
        <dbReference type="EC" id="2.7.7.108"/>
    </reaction>
</comment>
<comment type="catalytic activity">
    <reaction evidence="1">
        <text>L-tyrosyl-[protein] + ATP = O-(5'-adenylyl)-L-tyrosyl-[protein] + diphosphate</text>
        <dbReference type="Rhea" id="RHEA:54288"/>
        <dbReference type="Rhea" id="RHEA-COMP:10136"/>
        <dbReference type="Rhea" id="RHEA-COMP:13846"/>
        <dbReference type="ChEBI" id="CHEBI:30616"/>
        <dbReference type="ChEBI" id="CHEBI:33019"/>
        <dbReference type="ChEBI" id="CHEBI:46858"/>
        <dbReference type="ChEBI" id="CHEBI:83624"/>
        <dbReference type="EC" id="2.7.7.108"/>
    </reaction>
</comment>
<comment type="catalytic activity">
    <reaction evidence="1">
        <text>L-histidyl-[protein] + UTP = N(tele)-(5'-uridylyl)-L-histidyl-[protein] + diphosphate</text>
        <dbReference type="Rhea" id="RHEA:83891"/>
        <dbReference type="Rhea" id="RHEA-COMP:9745"/>
        <dbReference type="Rhea" id="RHEA-COMP:20239"/>
        <dbReference type="ChEBI" id="CHEBI:29979"/>
        <dbReference type="ChEBI" id="CHEBI:33019"/>
        <dbReference type="ChEBI" id="CHEBI:46398"/>
        <dbReference type="ChEBI" id="CHEBI:233474"/>
    </reaction>
</comment>
<comment type="catalytic activity">
    <reaction evidence="1">
        <text>L-seryl-[protein] + UTP = O-(5'-uridylyl)-L-seryl-[protein] + diphosphate</text>
        <dbReference type="Rhea" id="RHEA:64604"/>
        <dbReference type="Rhea" id="RHEA-COMP:9863"/>
        <dbReference type="Rhea" id="RHEA-COMP:16635"/>
        <dbReference type="ChEBI" id="CHEBI:29999"/>
        <dbReference type="ChEBI" id="CHEBI:33019"/>
        <dbReference type="ChEBI" id="CHEBI:46398"/>
        <dbReference type="ChEBI" id="CHEBI:156051"/>
    </reaction>
</comment>
<comment type="catalytic activity">
    <reaction evidence="1">
        <text>L-tyrosyl-[protein] + UTP = O-(5'-uridylyl)-L-tyrosyl-[protein] + diphosphate</text>
        <dbReference type="Rhea" id="RHEA:83887"/>
        <dbReference type="Rhea" id="RHEA-COMP:10136"/>
        <dbReference type="Rhea" id="RHEA-COMP:20238"/>
        <dbReference type="ChEBI" id="CHEBI:33019"/>
        <dbReference type="ChEBI" id="CHEBI:46398"/>
        <dbReference type="ChEBI" id="CHEBI:46858"/>
        <dbReference type="ChEBI" id="CHEBI:90602"/>
    </reaction>
</comment>
<comment type="cofactor">
    <cofactor evidence="1">
        <name>Mg(2+)</name>
        <dbReference type="ChEBI" id="CHEBI:18420"/>
    </cofactor>
    <cofactor evidence="1">
        <name>Mn(2+)</name>
        <dbReference type="ChEBI" id="CHEBI:29035"/>
    </cofactor>
</comment>
<comment type="similarity">
    <text evidence="1">Belongs to the SELO family.</text>
</comment>
<name>SELO_SALPC</name>
<reference key="1">
    <citation type="journal article" date="2009" name="PLoS ONE">
        <title>Salmonella paratyphi C: genetic divergence from Salmonella choleraesuis and pathogenic convergence with Salmonella typhi.</title>
        <authorList>
            <person name="Liu W.-Q."/>
            <person name="Feng Y."/>
            <person name="Wang Y."/>
            <person name="Zou Q.-H."/>
            <person name="Chen F."/>
            <person name="Guo J.-T."/>
            <person name="Peng Y.-H."/>
            <person name="Jin Y."/>
            <person name="Li Y.-G."/>
            <person name="Hu S.-N."/>
            <person name="Johnston R.N."/>
            <person name="Liu G.-R."/>
            <person name="Liu S.-L."/>
        </authorList>
    </citation>
    <scope>NUCLEOTIDE SEQUENCE [LARGE SCALE GENOMIC DNA]</scope>
    <source>
        <strain>RKS4594</strain>
    </source>
</reference>
<organism>
    <name type="scientific">Salmonella paratyphi C (strain RKS4594)</name>
    <dbReference type="NCBI Taxonomy" id="476213"/>
    <lineage>
        <taxon>Bacteria</taxon>
        <taxon>Pseudomonadati</taxon>
        <taxon>Pseudomonadota</taxon>
        <taxon>Gammaproteobacteria</taxon>
        <taxon>Enterobacterales</taxon>
        <taxon>Enterobacteriaceae</taxon>
        <taxon>Salmonella</taxon>
    </lineage>
</organism>
<accession>C0Q635</accession>
<feature type="chain" id="PRO_1000200065" description="Protein nucleotidyltransferase YdiU">
    <location>
        <begin position="1"/>
        <end position="480"/>
    </location>
</feature>
<feature type="active site" description="Proton acceptor" evidence="1">
    <location>
        <position position="248"/>
    </location>
</feature>
<feature type="binding site" evidence="1">
    <location>
        <position position="86"/>
    </location>
    <ligand>
        <name>ATP</name>
        <dbReference type="ChEBI" id="CHEBI:30616"/>
    </ligand>
</feature>
<feature type="binding site" evidence="1">
    <location>
        <position position="88"/>
    </location>
    <ligand>
        <name>ATP</name>
        <dbReference type="ChEBI" id="CHEBI:30616"/>
    </ligand>
</feature>
<feature type="binding site" evidence="1">
    <location>
        <position position="89"/>
    </location>
    <ligand>
        <name>ATP</name>
        <dbReference type="ChEBI" id="CHEBI:30616"/>
    </ligand>
</feature>
<feature type="binding site" evidence="1">
    <location>
        <position position="109"/>
    </location>
    <ligand>
        <name>ATP</name>
        <dbReference type="ChEBI" id="CHEBI:30616"/>
    </ligand>
</feature>
<feature type="binding site" evidence="1">
    <location>
        <position position="121"/>
    </location>
    <ligand>
        <name>ATP</name>
        <dbReference type="ChEBI" id="CHEBI:30616"/>
    </ligand>
</feature>
<feature type="binding site" evidence="1">
    <location>
        <position position="122"/>
    </location>
    <ligand>
        <name>ATP</name>
        <dbReference type="ChEBI" id="CHEBI:30616"/>
    </ligand>
</feature>
<feature type="binding site" evidence="1">
    <location>
        <position position="172"/>
    </location>
    <ligand>
        <name>ATP</name>
        <dbReference type="ChEBI" id="CHEBI:30616"/>
    </ligand>
</feature>
<feature type="binding site" evidence="1">
    <location>
        <position position="179"/>
    </location>
    <ligand>
        <name>ATP</name>
        <dbReference type="ChEBI" id="CHEBI:30616"/>
    </ligand>
</feature>
<feature type="binding site" evidence="1">
    <location>
        <position position="249"/>
    </location>
    <ligand>
        <name>Mg(2+)</name>
        <dbReference type="ChEBI" id="CHEBI:18420"/>
    </ligand>
</feature>
<feature type="binding site" evidence="1">
    <location>
        <position position="258"/>
    </location>
    <ligand>
        <name>ATP</name>
        <dbReference type="ChEBI" id="CHEBI:30616"/>
    </ligand>
</feature>
<feature type="binding site" evidence="1">
    <location>
        <position position="258"/>
    </location>
    <ligand>
        <name>Mg(2+)</name>
        <dbReference type="ChEBI" id="CHEBI:18420"/>
    </ligand>
</feature>
<dbReference type="EC" id="2.7.7.-" evidence="1"/>
<dbReference type="EC" id="2.7.7.108" evidence="1"/>
<dbReference type="EMBL" id="CP000857">
    <property type="protein sequence ID" value="ACN46501.1"/>
    <property type="molecule type" value="Genomic_DNA"/>
</dbReference>
<dbReference type="RefSeq" id="WP_000175652.1">
    <property type="nucleotide sequence ID" value="NC_012125.1"/>
</dbReference>
<dbReference type="SMR" id="C0Q635"/>
<dbReference type="KEGG" id="sei:SPC_2386"/>
<dbReference type="HOGENOM" id="CLU_010245_4_0_6"/>
<dbReference type="Proteomes" id="UP000001599">
    <property type="component" value="Chromosome"/>
</dbReference>
<dbReference type="GO" id="GO:0070733">
    <property type="term" value="F:AMPylase activity"/>
    <property type="evidence" value="ECO:0007669"/>
    <property type="project" value="TreeGrafter"/>
</dbReference>
<dbReference type="GO" id="GO:0005524">
    <property type="term" value="F:ATP binding"/>
    <property type="evidence" value="ECO:0007669"/>
    <property type="project" value="UniProtKB-UniRule"/>
</dbReference>
<dbReference type="GO" id="GO:0000287">
    <property type="term" value="F:magnesium ion binding"/>
    <property type="evidence" value="ECO:0007669"/>
    <property type="project" value="UniProtKB-UniRule"/>
</dbReference>
<dbReference type="HAMAP" id="MF_00692">
    <property type="entry name" value="YdiU_SelO"/>
    <property type="match status" value="1"/>
</dbReference>
<dbReference type="InterPro" id="IPR054838">
    <property type="entry name" value="adnlytase_SelO"/>
</dbReference>
<dbReference type="InterPro" id="IPR003846">
    <property type="entry name" value="SelO"/>
</dbReference>
<dbReference type="NCBIfam" id="NF040880">
    <property type="entry name" value="adnlytase_SelO"/>
    <property type="match status" value="1"/>
</dbReference>
<dbReference type="NCBIfam" id="NF000658">
    <property type="entry name" value="PRK00029.1"/>
    <property type="match status" value="1"/>
</dbReference>
<dbReference type="PANTHER" id="PTHR32057">
    <property type="entry name" value="PROTEIN ADENYLYLTRANSFERASE SELO, MITOCHONDRIAL"/>
    <property type="match status" value="1"/>
</dbReference>
<dbReference type="PANTHER" id="PTHR32057:SF14">
    <property type="entry name" value="PROTEIN ADENYLYLTRANSFERASE SELO, MITOCHONDRIAL"/>
    <property type="match status" value="1"/>
</dbReference>
<dbReference type="Pfam" id="PF02696">
    <property type="entry name" value="SelO"/>
    <property type="match status" value="1"/>
</dbReference>
<proteinExistence type="inferred from homology"/>